<accession>P27241</accession>
<accession>Q2M7T8</accession>
<feature type="chain" id="PRO_0000097290" description="Probable 3-deoxy-manno-octulosonic acid transferase">
    <location>
        <begin position="1"/>
        <end position="283"/>
    </location>
</feature>
<feature type="sequence conflict" description="In Ref. 1; AAA24522." evidence="5" ref="1">
    <original>S</original>
    <variation>G</variation>
    <location>
        <position position="58"/>
    </location>
</feature>
<reference key="1">
    <citation type="journal article" date="1992" name="J. Bacteriol.">
        <title>Comparison of lipopolysaccharide biosynthesis genes rfaK, rfaL, rfaY, and rfaZ of Escherichia coli K-12 and Salmonella typhimurium.</title>
        <authorList>
            <person name="Klena J.D."/>
            <person name="Pradel E."/>
            <person name="Schnaitman C.A."/>
        </authorList>
    </citation>
    <scope>NUCLEOTIDE SEQUENCE [GENOMIC DNA]</scope>
    <source>
        <strain>K12</strain>
    </source>
</reference>
<reference key="2">
    <citation type="journal article" date="1994" name="Nucleic Acids Res.">
        <title>Analysis of the Escherichia coli genome. V. DNA sequence of the region from 76.0 to 81.5 minutes.</title>
        <authorList>
            <person name="Sofia H.J."/>
            <person name="Burland V."/>
            <person name="Daniels D.L."/>
            <person name="Plunkett G. III"/>
            <person name="Blattner F.R."/>
        </authorList>
    </citation>
    <scope>NUCLEOTIDE SEQUENCE [LARGE SCALE GENOMIC DNA]</scope>
    <source>
        <strain>K12 / MG1655 / ATCC 47076</strain>
    </source>
</reference>
<reference key="3">
    <citation type="journal article" date="1997" name="Science">
        <title>The complete genome sequence of Escherichia coli K-12.</title>
        <authorList>
            <person name="Blattner F.R."/>
            <person name="Plunkett G. III"/>
            <person name="Bloch C.A."/>
            <person name="Perna N.T."/>
            <person name="Burland V."/>
            <person name="Riley M."/>
            <person name="Collado-Vides J."/>
            <person name="Glasner J.D."/>
            <person name="Rode C.K."/>
            <person name="Mayhew G.F."/>
            <person name="Gregor J."/>
            <person name="Davis N.W."/>
            <person name="Kirkpatrick H.A."/>
            <person name="Goeden M.A."/>
            <person name="Rose D.J."/>
            <person name="Mau B."/>
            <person name="Shao Y."/>
        </authorList>
    </citation>
    <scope>NUCLEOTIDE SEQUENCE [LARGE SCALE GENOMIC DNA]</scope>
    <source>
        <strain>K12 / MG1655 / ATCC 47076</strain>
    </source>
</reference>
<reference key="4">
    <citation type="journal article" date="2006" name="Mol. Syst. Biol.">
        <title>Highly accurate genome sequences of Escherichia coli K-12 strains MG1655 and W3110.</title>
        <authorList>
            <person name="Hayashi K."/>
            <person name="Morooka N."/>
            <person name="Yamamoto Y."/>
            <person name="Fujita K."/>
            <person name="Isono K."/>
            <person name="Choi S."/>
            <person name="Ohtsubo E."/>
            <person name="Baba T."/>
            <person name="Wanner B.L."/>
            <person name="Mori H."/>
            <person name="Horiuchi T."/>
        </authorList>
    </citation>
    <scope>NUCLEOTIDE SEQUENCE [LARGE SCALE GENOMIC DNA]</scope>
    <source>
        <strain>K12 / W3110 / ATCC 27325 / DSM 5911</strain>
    </source>
</reference>
<reference key="5">
    <citation type="journal article" date="1992" name="J. Bacteriol.">
        <title>Role of Escherichia coli K-12 rfa genes and the rfp gene of Shigella dysenteriae 1 in generation of lipopolysaccharide core heterogeneity and attachment of O antigen.</title>
        <authorList>
            <person name="Klena J.D."/>
            <person name="Ashford R.S. II"/>
            <person name="Schnaitman C.A."/>
        </authorList>
    </citation>
    <scope>FUNCTION</scope>
    <scope>DISRUPTION PHENOTYPE</scope>
    <source>
        <strain>K12</strain>
    </source>
</reference>
<reference key="6">
    <citation type="journal article" date="1998" name="Mol. Microbiol.">
        <title>Molecular basis for structural diversity in the core regions of the lipopolysaccharides of Escherichia coli and Salmonella enterica.</title>
        <authorList>
            <person name="Heinrichs D.E."/>
            <person name="Yethon J.A."/>
            <person name="Whitfield C."/>
        </authorList>
    </citation>
    <scope>NOMENCLATURE</scope>
    <scope>REVIEW</scope>
</reference>
<reference key="7">
    <citation type="journal article" date="2003" name="J. Bacteriol.">
        <title>Overexpression of the waaZ gene leads to modification of the structure of the inner core region of Escherichia coli lipopolysaccharide, truncation of the outer core, and reduction of the amount of O polysaccharide on the cell surface.</title>
        <authorList>
            <person name="Frirdich E."/>
            <person name="Lindner B."/>
            <person name="Holst O."/>
            <person name="Whitfield C."/>
        </authorList>
    </citation>
    <scope>FUNCTION</scope>
    <scope>OVEREXPRESSION IN STRAIN F470</scope>
    <scope>SUBCELLULAR LOCATION</scope>
    <source>
        <strain>F470</strain>
        <strain>K12</strain>
    </source>
</reference>
<evidence type="ECO:0000269" key="1">
    <source>
    </source>
</evidence>
<evidence type="ECO:0000269" key="2">
    <source>
    </source>
</evidence>
<evidence type="ECO:0000303" key="3">
    <source>
    </source>
</evidence>
<evidence type="ECO:0000303" key="4">
    <source>
    </source>
</evidence>
<evidence type="ECO:0000305" key="5"/>
<evidence type="ECO:0000305" key="6">
    <source>
    </source>
</evidence>
<evidence type="ECO:0000305" key="7">
    <source>
    </source>
</evidence>
<gene>
    <name evidence="4" type="primary">waaZ</name>
    <name evidence="3" type="synonym">rfaZ</name>
    <name type="ordered locus">b3624</name>
    <name type="ordered locus">JW3599</name>
</gene>
<comment type="function">
    <text evidence="1 2">Involved in the biosynthesis of the core oligosaccharide region of lipopolysaccharide (LPS) (PubMed:12591884). Required for the addition of 3-deoxy-D-manno-oct-2-ulosonic acid III (KdoIII) to the KdoII residue of the inner lipopolysaccharide core (PubMed:12591884). May also play a role in a lipooligosaccharide (LOS) biosynthesis pathway (PubMed:1385388).</text>
</comment>
<comment type="catalytic activity">
    <reaction evidence="6">
        <text>an alpha-Kdo-(2-&gt;4)-alpha-Kdo-(2-&gt;6)-lipid IVA + CMP-3-deoxy-beta-D-manno-octulosonate = an alpha-Kdo-(2-&gt;4)-alpha-Kdo-(2-&gt;4)-alpha-Kdo-(2-&gt;6)-lipid IVA + CMP + H(+)</text>
        <dbReference type="Rhea" id="RHEA:73831"/>
        <dbReference type="ChEBI" id="CHEBI:15378"/>
        <dbReference type="ChEBI" id="CHEBI:60377"/>
        <dbReference type="ChEBI" id="CHEBI:85987"/>
        <dbReference type="ChEBI" id="CHEBI:176429"/>
        <dbReference type="ChEBI" id="CHEBI:193025"/>
        <dbReference type="EC" id="2.4.99.15"/>
    </reaction>
</comment>
<comment type="catalytic activity">
    <reaction evidence="6">
        <text>alpha-Kdo-(2-&gt;4)-alpha-Kdo-(2-&gt;6)-lipid IVA (E. coli) + CMP-3-deoxy-beta-D-manno-octulosonate = alpha-Kdo-(2-&gt;4)-alpha-Kdo-(2-&gt;4)-alpha-Kdo-(2-&gt;6)-lipid IVA + CMP + H(+)</text>
        <dbReference type="Rhea" id="RHEA:46484"/>
        <dbReference type="ChEBI" id="CHEBI:15378"/>
        <dbReference type="ChEBI" id="CHEBI:60365"/>
        <dbReference type="ChEBI" id="CHEBI:60367"/>
        <dbReference type="ChEBI" id="CHEBI:60377"/>
        <dbReference type="ChEBI" id="CHEBI:85987"/>
        <dbReference type="EC" id="2.4.99.15"/>
    </reaction>
</comment>
<comment type="pathway">
    <text evidence="6">Bacterial outer membrane biogenesis; LPS core biosynthesis.</text>
</comment>
<comment type="pathway">
    <text evidence="7">Bacterial outer membrane biogenesis; LOS core biosynthesis.</text>
</comment>
<comment type="subcellular location">
    <subcellularLocation>
        <location evidence="1">Cytoplasm</location>
    </subcellularLocation>
    <text evidence="1">When overexpressed, a significant amount is also located in the membrane fraction.</text>
</comment>
<comment type="disruption phenotype">
    <text evidence="2">Mutation of the gene results in changes in the LPS core but does not affect the attachment of O antigen in an E.coli strain producing the O antigen from S.dysenteriae.</text>
</comment>
<comment type="miscellaneous">
    <text evidence="1 6">KdoIII is found in only 10 to 15% of the LPS molecules on the cell surface of E.coli K12 (Probable). Overexpression in an E.coli F470 isolate (with an R1 core, lacking the waaZ gene) leads to the formation of truncated LPS structures, lacking up to 3 hexoses from the outer core, and which contain a KdoIII residue not normally found in the R1 core (PubMed:12591884).</text>
</comment>
<organism>
    <name type="scientific">Escherichia coli (strain K12)</name>
    <dbReference type="NCBI Taxonomy" id="83333"/>
    <lineage>
        <taxon>Bacteria</taxon>
        <taxon>Pseudomonadati</taxon>
        <taxon>Pseudomonadota</taxon>
        <taxon>Gammaproteobacteria</taxon>
        <taxon>Enterobacterales</taxon>
        <taxon>Enterobacteriaceae</taxon>
        <taxon>Escherichia</taxon>
    </lineage>
</organism>
<keyword id="KW-0963">Cytoplasm</keyword>
<keyword id="KW-0448">Lipopolysaccharide biosynthesis</keyword>
<keyword id="KW-1185">Reference proteome</keyword>
<keyword id="KW-0808">Transferase</keyword>
<sequence length="283" mass="32920">MKNIRYIDKKDVENLIENKISDDVIIFLSGPTSQKTPLSVLRTKDIIAVNGSAQYLLSNNIVPFIYVLTDVRFLHQRRDDFYKFSQRSRYTIVNVDVYEHASKEDKLYILQNCLVLRSFYRREKGGFIKKIKFNILRQIHKELLISVPLSKKGRLVGFCKDISLGYCSCHTIAFAAIQIAYSLKYARIICSGLDLTGSCSRFYDENKNPMPSELSRDLFKILPFFRFMHDNVKDINIYNLSDDTAISYDVIPFIKLQDISAEESKDMTRKKMQYRTSTDSYAN</sequence>
<dbReference type="EC" id="2.4.99.15" evidence="6"/>
<dbReference type="EMBL" id="M95398">
    <property type="protein sequence ID" value="AAA24522.1"/>
    <property type="molecule type" value="Genomic_DNA"/>
</dbReference>
<dbReference type="EMBL" id="U00039">
    <property type="protein sequence ID" value="AAB18601.1"/>
    <property type="molecule type" value="Genomic_DNA"/>
</dbReference>
<dbReference type="EMBL" id="U00096">
    <property type="protein sequence ID" value="AAC76648.1"/>
    <property type="molecule type" value="Genomic_DNA"/>
</dbReference>
<dbReference type="EMBL" id="AP009048">
    <property type="protein sequence ID" value="BAE77668.1"/>
    <property type="molecule type" value="Genomic_DNA"/>
</dbReference>
<dbReference type="PIR" id="S47845">
    <property type="entry name" value="S47845"/>
</dbReference>
<dbReference type="RefSeq" id="NP_418081.1">
    <property type="nucleotide sequence ID" value="NC_000913.3"/>
</dbReference>
<dbReference type="RefSeq" id="WP_000790279.1">
    <property type="nucleotide sequence ID" value="NZ_LN832404.1"/>
</dbReference>
<dbReference type="BioGRID" id="4261610">
    <property type="interactions" value="249"/>
</dbReference>
<dbReference type="FunCoup" id="P27241">
    <property type="interactions" value="51"/>
</dbReference>
<dbReference type="IntAct" id="P27241">
    <property type="interactions" value="7"/>
</dbReference>
<dbReference type="STRING" id="511145.b3624"/>
<dbReference type="CAZy" id="GT73">
    <property type="family name" value="Glycosyltransferase Family 73"/>
</dbReference>
<dbReference type="jPOST" id="P27241"/>
<dbReference type="PaxDb" id="511145-b3624"/>
<dbReference type="EnsemblBacteria" id="AAC76648">
    <property type="protein sequence ID" value="AAC76648"/>
    <property type="gene ID" value="b3624"/>
</dbReference>
<dbReference type="GeneID" id="948146"/>
<dbReference type="KEGG" id="ecj:JW3599"/>
<dbReference type="KEGG" id="eco:b3624"/>
<dbReference type="KEGG" id="ecoc:C3026_19645"/>
<dbReference type="PATRIC" id="fig|1411691.4.peg.3082"/>
<dbReference type="EchoBASE" id="EB1396"/>
<dbReference type="eggNOG" id="ENOG502Z7NB">
    <property type="taxonomic scope" value="Bacteria"/>
</dbReference>
<dbReference type="HOGENOM" id="CLU_090332_0_0_6"/>
<dbReference type="InParanoid" id="P27241"/>
<dbReference type="OMA" id="KPFFYVC"/>
<dbReference type="OrthoDB" id="6555425at2"/>
<dbReference type="PhylomeDB" id="P27241"/>
<dbReference type="BioCyc" id="EcoCyc:EG11426-MONOMER"/>
<dbReference type="BioCyc" id="MetaCyc:EG11426-MONOMER"/>
<dbReference type="UniPathway" id="UPA00958"/>
<dbReference type="UniPathway" id="UPA00976"/>
<dbReference type="PRO" id="PR:P27241"/>
<dbReference type="Proteomes" id="UP000000625">
    <property type="component" value="Chromosome"/>
</dbReference>
<dbReference type="GO" id="GO:0005737">
    <property type="term" value="C:cytoplasm"/>
    <property type="evidence" value="ECO:0007669"/>
    <property type="project" value="UniProtKB-SubCell"/>
</dbReference>
<dbReference type="GO" id="GO:0005886">
    <property type="term" value="C:plasma membrane"/>
    <property type="evidence" value="ECO:0007005"/>
    <property type="project" value="EcoCyc"/>
</dbReference>
<dbReference type="GO" id="GO:0016740">
    <property type="term" value="F:transferase activity"/>
    <property type="evidence" value="ECO:0007669"/>
    <property type="project" value="UniProtKB-KW"/>
</dbReference>
<dbReference type="GO" id="GO:0009244">
    <property type="term" value="P:lipopolysaccharide core region biosynthetic process"/>
    <property type="evidence" value="ECO:0000315"/>
    <property type="project" value="EcoCyc"/>
</dbReference>
<dbReference type="Gene3D" id="3.90.1480.10">
    <property type="entry name" value="Alpha-2,3-sialyltransferase"/>
    <property type="match status" value="1"/>
</dbReference>
<dbReference type="InterPro" id="IPR031026">
    <property type="entry name" value="WaaZ_KDO_III"/>
</dbReference>
<dbReference type="NCBIfam" id="NF007333">
    <property type="entry name" value="PRK09822.1"/>
    <property type="match status" value="1"/>
</dbReference>
<dbReference type="NCBIfam" id="TIGR04437">
    <property type="entry name" value="WaaZ_KDO_III"/>
    <property type="match status" value="1"/>
</dbReference>
<proteinExistence type="predicted"/>
<protein>
    <recommendedName>
        <fullName evidence="5">Probable 3-deoxy-manno-octulosonic acid transferase</fullName>
        <shortName evidence="5">Kdo transferase</shortName>
        <ecNumber evidence="6">2.4.99.15</ecNumber>
    </recommendedName>
    <alternativeName>
        <fullName evidence="5">Lipopolysaccharide core biosynthesis protein WaaZ</fullName>
    </alternativeName>
</protein>
<name>WAAZ_ECOLI</name>